<protein>
    <recommendedName>
        <fullName>Kunitz-type U15-theraphotoxin-Hhn1n</fullName>
        <shortName>U15-TRTX-Hhn1n</shortName>
    </recommendedName>
    <alternativeName>
        <fullName>Kunitz-type serine protease inhibitor hainantoxin-XI-14</fullName>
        <shortName>HNTX-XI-14</shortName>
    </alternativeName>
</protein>
<comment type="function">
    <text evidence="2">Serine protease inhibitor that inhibits trypsin at a molar ratio of 1:1.</text>
</comment>
<comment type="subcellular location">
    <subcellularLocation>
        <location evidence="6">Secreted</location>
    </subcellularLocation>
</comment>
<comment type="tissue specificity">
    <text evidence="6">Expressed by the venom gland.</text>
</comment>
<comment type="similarity">
    <text evidence="5">Belongs to the venom Kunitz-type family. 01 (intermediate) subfamily.</text>
</comment>
<accession>D2Y2Q5</accession>
<feature type="signal peptide" evidence="3">
    <location>
        <begin position="1"/>
        <end position="27"/>
    </location>
</feature>
<feature type="propeptide" id="PRO_0000401004" evidence="1">
    <location>
        <begin position="28"/>
        <end position="33"/>
    </location>
</feature>
<feature type="peptide" id="PRO_0000401005" description="Kunitz-type U15-theraphotoxin-Hhn1n">
    <location>
        <begin position="34"/>
        <end position="88"/>
    </location>
</feature>
<feature type="domain" description="BPTI/Kunitz inhibitor" evidence="4">
    <location>
        <begin position="37"/>
        <end position="85"/>
    </location>
</feature>
<feature type="site" description="Reactive bond for trypsin" evidence="1">
    <location>
        <begin position="47"/>
        <end position="48"/>
    </location>
</feature>
<feature type="disulfide bond" evidence="4">
    <location>
        <begin position="37"/>
        <end position="85"/>
    </location>
</feature>
<feature type="disulfide bond" evidence="4">
    <location>
        <begin position="60"/>
        <end position="81"/>
    </location>
</feature>
<organism>
    <name type="scientific">Cyriopagopus hainanus</name>
    <name type="common">Chinese bird spider</name>
    <name type="synonym">Haplopelma hainanum</name>
    <dbReference type="NCBI Taxonomy" id="209901"/>
    <lineage>
        <taxon>Eukaryota</taxon>
        <taxon>Metazoa</taxon>
        <taxon>Ecdysozoa</taxon>
        <taxon>Arthropoda</taxon>
        <taxon>Chelicerata</taxon>
        <taxon>Arachnida</taxon>
        <taxon>Araneae</taxon>
        <taxon>Mygalomorphae</taxon>
        <taxon>Theraphosidae</taxon>
        <taxon>Haplopelma</taxon>
    </lineage>
</organism>
<name>VKTN1_CYRHA</name>
<proteinExistence type="inferred from homology"/>
<evidence type="ECO:0000250" key="1"/>
<evidence type="ECO:0000250" key="2">
    <source>
        <dbReference type="UniProtKB" id="P68425"/>
    </source>
</evidence>
<evidence type="ECO:0000255" key="3"/>
<evidence type="ECO:0000255" key="4">
    <source>
        <dbReference type="PROSITE-ProRule" id="PRU00031"/>
    </source>
</evidence>
<evidence type="ECO:0000305" key="5"/>
<evidence type="ECO:0000305" key="6">
    <source>
    </source>
</evidence>
<dbReference type="EMBL" id="GU293132">
    <property type="protein sequence ID" value="ADB56948.1"/>
    <property type="molecule type" value="Genomic_DNA"/>
</dbReference>
<dbReference type="SMR" id="D2Y2Q5"/>
<dbReference type="ArachnoServer" id="AS001830">
    <property type="toxin name" value="U15-theraphotoxin-Hhn1n"/>
</dbReference>
<dbReference type="GO" id="GO:0005576">
    <property type="term" value="C:extracellular region"/>
    <property type="evidence" value="ECO:0007669"/>
    <property type="project" value="UniProtKB-SubCell"/>
</dbReference>
<dbReference type="GO" id="GO:0015459">
    <property type="term" value="F:potassium channel regulator activity"/>
    <property type="evidence" value="ECO:0007669"/>
    <property type="project" value="UniProtKB-KW"/>
</dbReference>
<dbReference type="GO" id="GO:0004867">
    <property type="term" value="F:serine-type endopeptidase inhibitor activity"/>
    <property type="evidence" value="ECO:0007669"/>
    <property type="project" value="UniProtKB-KW"/>
</dbReference>
<dbReference type="GO" id="GO:0090729">
    <property type="term" value="F:toxin activity"/>
    <property type="evidence" value="ECO:0007669"/>
    <property type="project" value="UniProtKB-KW"/>
</dbReference>
<dbReference type="GO" id="GO:0044562">
    <property type="term" value="P:envenomation resulting in negative regulation of voltage-gated potassium channel activity in another organism"/>
    <property type="evidence" value="ECO:0007669"/>
    <property type="project" value="UniProtKB-ARBA"/>
</dbReference>
<dbReference type="CDD" id="cd22598">
    <property type="entry name" value="Kunitz_huwentoxin"/>
    <property type="match status" value="1"/>
</dbReference>
<dbReference type="FunFam" id="4.10.410.10:FF:000020">
    <property type="entry name" value="Collagen, type VI, alpha 3"/>
    <property type="match status" value="1"/>
</dbReference>
<dbReference type="Gene3D" id="4.10.410.10">
    <property type="entry name" value="Pancreatic trypsin inhibitor Kunitz domain"/>
    <property type="match status" value="1"/>
</dbReference>
<dbReference type="InterPro" id="IPR002223">
    <property type="entry name" value="Kunitz_BPTI"/>
</dbReference>
<dbReference type="InterPro" id="IPR036880">
    <property type="entry name" value="Kunitz_BPTI_sf"/>
</dbReference>
<dbReference type="PANTHER" id="PTHR47247">
    <property type="entry name" value="KUNITZ-TYPE PROTEASE INHIBITOR 2"/>
    <property type="match status" value="1"/>
</dbReference>
<dbReference type="PANTHER" id="PTHR47247:SF1">
    <property type="entry name" value="KUNITZ-TYPE PROTEASE INHIBITOR 2"/>
    <property type="match status" value="1"/>
</dbReference>
<dbReference type="Pfam" id="PF00014">
    <property type="entry name" value="Kunitz_BPTI"/>
    <property type="match status" value="1"/>
</dbReference>
<dbReference type="PRINTS" id="PR00759">
    <property type="entry name" value="BASICPTASE"/>
</dbReference>
<dbReference type="SMART" id="SM00131">
    <property type="entry name" value="KU"/>
    <property type="match status" value="1"/>
</dbReference>
<dbReference type="SUPFAM" id="SSF57362">
    <property type="entry name" value="BPTI-like"/>
    <property type="match status" value="1"/>
</dbReference>
<dbReference type="PROSITE" id="PS50279">
    <property type="entry name" value="BPTI_KUNITZ_2"/>
    <property type="match status" value="1"/>
</dbReference>
<keyword id="KW-1015">Disulfide bond</keyword>
<keyword id="KW-0646">Protease inhibitor</keyword>
<keyword id="KW-0964">Secreted</keyword>
<keyword id="KW-0722">Serine protease inhibitor</keyword>
<keyword id="KW-0732">Signal</keyword>
<reference key="1">
    <citation type="journal article" date="2010" name="J. Proteome Res.">
        <title>Molecular diversification of peptide toxins from the tarantula Haplopelma hainanum (Ornithoctonus hainana) venom based on transcriptomic, peptidomic, and genomic analyses.</title>
        <authorList>
            <person name="Tang X."/>
            <person name="Zhang Y."/>
            <person name="Hu W."/>
            <person name="Xu D."/>
            <person name="Tao H."/>
            <person name="Yang X."/>
            <person name="Li Y."/>
            <person name="Jiang L."/>
            <person name="Liang S."/>
        </authorList>
    </citation>
    <scope>NUCLEOTIDE SEQUENCE [LARGE SCALE GENOMIC DNA]</scope>
    <source>
        <tissue>Venom gland</tissue>
    </source>
</reference>
<sequence>MGIARILSAVLFLSVLFVVTFPTLLSADHHDGRIDTCRLPSDRGGCKASFERWYFNGTTCTKFVYGGYGGNDNRFPTEKACMKRCAKA</sequence>